<organism>
    <name type="scientific">Escherichia phage Mu</name>
    <name type="common">Bacteriophage Mu</name>
    <dbReference type="NCBI Taxonomy" id="2681603"/>
    <lineage>
        <taxon>Viruses</taxon>
        <taxon>Duplodnaviria</taxon>
        <taxon>Heunggongvirae</taxon>
        <taxon>Uroviricota</taxon>
        <taxon>Caudoviricetes</taxon>
        <taxon>Muvirus</taxon>
        <taxon>Muvirus mu</taxon>
    </lineage>
</organism>
<sequence>MLIGYVRVSTNDQNTDLQRNALVCAGCEQIFEDKLSGTRTDRPGLKRALKRLQKGDTLVVWKLDRLGRSMKHLISLVGELRERGINFRSLTDSIDTSSPMGRFFFHVMGALAEMERELIIERTMAGLAAARNKGRIGGRPPKLTKAEWEQAGRLLAQGIPRKQVALIYDVALSTLYKKHPAKRAHIENDDRIN</sequence>
<reference key="1">
    <citation type="journal article" date="1983" name="Proc. Natl. Acad. Sci. U.S.A.">
        <title>DNA inversions in the chromosome of Escherichia coli and in bacteriophage Mu: relationship to other site-specific recombination systems.</title>
        <authorList>
            <person name="Plasterk R.H.A."/>
            <person name="Brinkman A."/>
            <person name="van de Putte P."/>
        </authorList>
    </citation>
    <scope>NUCLEOTIDE SEQUENCE [GENOMIC DNA]</scope>
</reference>
<reference key="2">
    <citation type="journal article" date="2002" name="J. Mol. Biol.">
        <title>Bacteriophage Mu genome sequence: analysis and comparison with Mu-like prophages in Haemophilus, Neisseria and Deinococcus.</title>
        <authorList>
            <person name="Morgan G.J."/>
            <person name="Hatfull G.F."/>
            <person name="Casjens S."/>
            <person name="Hendrix R.W."/>
        </authorList>
    </citation>
    <scope>NUCLEOTIDE SEQUENCE [LARGE SCALE GENOMIC DNA]</scope>
</reference>
<reference key="3">
    <citation type="journal article" date="1983" name="Cold Spring Harb. Symp. Quant. Biol.">
        <title>Methylation regulates the expression of a DNA-modification function encoded by bacteriophage Mu.</title>
        <authorList>
            <person name="Kahmann R."/>
        </authorList>
    </citation>
    <scope>NUCLEOTIDE SEQUENCE [GENOMIC DNA] OF 173-193</scope>
</reference>
<reference key="4">
    <citation type="journal article" date="1988" name="EMBO J.">
        <title>The DNA invertase Gin of phage Mu: formation of a covalent complex with DNA via a phosphoserine at amino acid position 9.</title>
        <authorList>
            <person name="Klippel A."/>
            <person name="Mertens G."/>
            <person name="Patschinsky T."/>
            <person name="Kahmann R."/>
        </authorList>
    </citation>
    <scope>NUCLEOTIDE SEQUENCE [GENOMIC DNA] OF 1-16</scope>
    <scope>COVALENT COMPLEX WITH DNA</scope>
    <scope>DNA-BINDING</scope>
    <scope>ACTIVE SITE</scope>
    <scope>MUTAGENESIS OF SER-9</scope>
</reference>
<reference key="5">
    <citation type="journal article" date="1984" name="Proc. Natl. Acad. Sci. U.S.A.">
        <title>A genetic switch in vitro: DNA inversion by Gin protein of phage Mu.</title>
        <authorList>
            <person name="Plasterk R.H."/>
            <person name="Kanaar R."/>
            <person name="van de Putte P."/>
        </authorList>
    </citation>
    <scope>FUNCTION</scope>
</reference>
<reference key="6">
    <citation type="journal article" date="1985" name="Cell">
        <title>G inversion in bacteriophage Mu DNA is stimulated by a site within the invertase gene and a host factor.</title>
        <authorList>
            <person name="Kahmann R."/>
            <person name="Rudt F."/>
            <person name="Koch C."/>
            <person name="Mertens G."/>
        </authorList>
    </citation>
    <scope>FUNCTION</scope>
</reference>
<reference key="7">
    <citation type="journal article" date="1988" name="EMBO J.">
        <title>Isolation and characterization of unusual gin mutants.</title>
        <authorList>
            <person name="Klippel A."/>
            <person name="Cloppenborg K."/>
            <person name="Kahmann R."/>
        </authorList>
    </citation>
    <scope>FUNCTION OF MUTANTS</scope>
</reference>
<reference key="8">
    <citation type="journal article" date="1988" name="EMBO J.">
        <title>Site-specific recombination in bacteriophage Mu: characterization of binding sites for the DNA invertase Gin.</title>
        <authorList>
            <person name="Mertens G."/>
            <person name="Klippel A."/>
            <person name="Fuss H."/>
            <person name="Blocker H."/>
            <person name="Frank R."/>
            <person name="Kahmann R."/>
        </authorList>
    </citation>
    <scope>DNA-BINDING</scope>
</reference>
<reference key="9">
    <citation type="journal article" date="1993" name="Genetics">
        <title>Mutational analysis of a C-dependent late promoter of bacteriophage Mu.</title>
        <authorList>
            <person name="Chiang L.W."/>
            <person name="Howe M.M."/>
        </authorList>
    </citation>
    <scope>INDUCTION</scope>
</reference>
<reference key="10">
    <citation type="journal article" date="1995" name="Biochemistry">
        <title>Gin invertase of bacteriophage Mu is a dimer in solution, with the domain for dimerization in the N-terminal part of the protein.</title>
        <authorList>
            <person name="Spaeny-Dekking L."/>
            <person name="van Hemert M."/>
            <person name="van de Putte P."/>
            <person name="Goosen N."/>
        </authorList>
    </citation>
    <scope>SUBUNIT</scope>
    <scope>REGION OF DIMERIZATION</scope>
</reference>
<reference key="11">
    <citation type="journal article" date="2013" name="Nucleic Acids Res.">
        <title>Crystal structure of an intermediate of rotating dimers within the synaptic tetramer of the G-segment invertase.</title>
        <authorList>
            <person name="Ritacco C.J."/>
            <person name="Kamtekar S."/>
            <person name="Wang J."/>
            <person name="Steitz T.A."/>
        </authorList>
    </citation>
    <scope>X-RAY CRYSTALLOGRAPHY (3.8 ANGSTROMS) OF VAL-114 MUTANT</scope>
    <scope>DNA-BINDING</scope>
    <scope>SUBUNIT</scope>
    <scope>FUNCTION</scope>
</reference>
<accession>P03015</accession>
<accession>Q9T1U8</accession>
<protein>
    <recommendedName>
        <fullName>Serine recombinase gin</fullName>
        <ecNumber>3.1.22.-</ecNumber>
        <ecNumber>6.5.1.-</ecNumber>
    </recommendedName>
    <alternativeName>
        <fullName>G-segment invertase</fullName>
        <shortName>Gin</shortName>
    </alternativeName>
    <alternativeName>
        <fullName>Gene product 53</fullName>
        <shortName>gp53</shortName>
    </alternativeName>
</protein>
<dbReference type="EC" id="3.1.22.-"/>
<dbReference type="EC" id="6.5.1.-"/>
<dbReference type="EMBL" id="AF083977">
    <property type="protein sequence ID" value="AAF01129.1"/>
    <property type="molecule type" value="Genomic_DNA"/>
</dbReference>
<dbReference type="EMBL" id="V01463">
    <property type="protein sequence ID" value="CAA24708.1"/>
    <property type="molecule type" value="Genomic_DNA"/>
</dbReference>
<dbReference type="PIR" id="S02705">
    <property type="entry name" value="JWBPU"/>
</dbReference>
<dbReference type="RefSeq" id="NP_050655.1">
    <property type="nucleotide sequence ID" value="NC_000929.1"/>
</dbReference>
<dbReference type="PDB" id="3UJ3">
    <property type="method" value="X-ray"/>
    <property type="resolution" value="3.80 A"/>
    <property type="chains" value="X=1-193"/>
</dbReference>
<dbReference type="PDB" id="4M6F">
    <property type="method" value="X-ray"/>
    <property type="resolution" value="4.99 A"/>
    <property type="chains" value="A=1-193"/>
</dbReference>
<dbReference type="PDBsum" id="3UJ3"/>
<dbReference type="PDBsum" id="4M6F"/>
<dbReference type="SMR" id="P03015"/>
<dbReference type="GeneID" id="2636258"/>
<dbReference type="KEGG" id="vg:2636258"/>
<dbReference type="EvolutionaryTrace" id="P03015"/>
<dbReference type="Proteomes" id="UP000002611">
    <property type="component" value="Genome"/>
</dbReference>
<dbReference type="GO" id="GO:0030430">
    <property type="term" value="C:host cell cytoplasm"/>
    <property type="evidence" value="ECO:0007669"/>
    <property type="project" value="UniProtKB-SubCell"/>
</dbReference>
<dbReference type="GO" id="GO:0003677">
    <property type="term" value="F:DNA binding"/>
    <property type="evidence" value="ECO:0007669"/>
    <property type="project" value="UniProtKB-KW"/>
</dbReference>
<dbReference type="GO" id="GO:0000150">
    <property type="term" value="F:DNA strand exchange activity"/>
    <property type="evidence" value="ECO:0007669"/>
    <property type="project" value="UniProtKB-KW"/>
</dbReference>
<dbReference type="GO" id="GO:0016787">
    <property type="term" value="F:hydrolase activity"/>
    <property type="evidence" value="ECO:0007669"/>
    <property type="project" value="UniProtKB-KW"/>
</dbReference>
<dbReference type="GO" id="GO:0016874">
    <property type="term" value="F:ligase activity"/>
    <property type="evidence" value="ECO:0007669"/>
    <property type="project" value="UniProtKB-KW"/>
</dbReference>
<dbReference type="GO" id="GO:0015074">
    <property type="term" value="P:DNA integration"/>
    <property type="evidence" value="ECO:0007669"/>
    <property type="project" value="UniProtKB-KW"/>
</dbReference>
<dbReference type="GO" id="GO:0046718">
    <property type="term" value="P:symbiont entry into host cell"/>
    <property type="evidence" value="ECO:0007669"/>
    <property type="project" value="UniProtKB-KW"/>
</dbReference>
<dbReference type="GO" id="GO:0098678">
    <property type="term" value="P:viral tropism switching"/>
    <property type="evidence" value="ECO:0007669"/>
    <property type="project" value="UniProtKB-KW"/>
</dbReference>
<dbReference type="CDD" id="cd00569">
    <property type="entry name" value="HTH_Hin_like"/>
    <property type="match status" value="1"/>
</dbReference>
<dbReference type="CDD" id="cd03768">
    <property type="entry name" value="SR_ResInv"/>
    <property type="match status" value="1"/>
</dbReference>
<dbReference type="FunFam" id="3.40.50.1390:FF:000001">
    <property type="entry name" value="DNA recombinase"/>
    <property type="match status" value="1"/>
</dbReference>
<dbReference type="Gene3D" id="1.10.10.60">
    <property type="entry name" value="Homeodomain-like"/>
    <property type="match status" value="1"/>
</dbReference>
<dbReference type="Gene3D" id="3.40.50.1390">
    <property type="entry name" value="Resolvase, N-terminal catalytic domain"/>
    <property type="match status" value="1"/>
</dbReference>
<dbReference type="InterPro" id="IPR009057">
    <property type="entry name" value="Homeodomain-like_sf"/>
</dbReference>
<dbReference type="InterPro" id="IPR006118">
    <property type="entry name" value="Recombinase_CS"/>
</dbReference>
<dbReference type="InterPro" id="IPR006119">
    <property type="entry name" value="Resolv_N"/>
</dbReference>
<dbReference type="InterPro" id="IPR036162">
    <property type="entry name" value="Resolvase-like_N_sf"/>
</dbReference>
<dbReference type="InterPro" id="IPR006120">
    <property type="entry name" value="Resolvase_HTH_dom"/>
</dbReference>
<dbReference type="InterPro" id="IPR050639">
    <property type="entry name" value="SSR_resolvase"/>
</dbReference>
<dbReference type="PANTHER" id="PTHR30461">
    <property type="entry name" value="DNA-INVERTASE FROM LAMBDOID PROPHAGE"/>
    <property type="match status" value="1"/>
</dbReference>
<dbReference type="PANTHER" id="PTHR30461:SF2">
    <property type="entry name" value="SERINE RECOMBINASE PINE-RELATED"/>
    <property type="match status" value="1"/>
</dbReference>
<dbReference type="Pfam" id="PF02796">
    <property type="entry name" value="HTH_7"/>
    <property type="match status" value="1"/>
</dbReference>
<dbReference type="Pfam" id="PF00239">
    <property type="entry name" value="Resolvase"/>
    <property type="match status" value="1"/>
</dbReference>
<dbReference type="SMART" id="SM00857">
    <property type="entry name" value="Resolvase"/>
    <property type="match status" value="1"/>
</dbReference>
<dbReference type="SUPFAM" id="SSF46689">
    <property type="entry name" value="Homeodomain-like"/>
    <property type="match status" value="1"/>
</dbReference>
<dbReference type="SUPFAM" id="SSF53041">
    <property type="entry name" value="Resolvase-like"/>
    <property type="match status" value="1"/>
</dbReference>
<dbReference type="PROSITE" id="PS00397">
    <property type="entry name" value="RECOMBINASES_1"/>
    <property type="match status" value="1"/>
</dbReference>
<dbReference type="PROSITE" id="PS00398">
    <property type="entry name" value="RECOMBINASES_2"/>
    <property type="match status" value="1"/>
</dbReference>
<dbReference type="PROSITE" id="PS51736">
    <property type="entry name" value="RECOMBINASES_3"/>
    <property type="match status" value="1"/>
</dbReference>
<keyword id="KW-0002">3D-structure</keyword>
<keyword id="KW-0229">DNA integration</keyword>
<keyword id="KW-0230">DNA invertase</keyword>
<keyword id="KW-0233">DNA recombination</keyword>
<keyword id="KW-0238">DNA-binding</keyword>
<keyword id="KW-1035">Host cytoplasm</keyword>
<keyword id="KW-0378">Hydrolase</keyword>
<keyword id="KW-0426">Late protein</keyword>
<keyword id="KW-0436">Ligase</keyword>
<keyword id="KW-1185">Reference proteome</keyword>
<keyword id="KW-1264">Viral receptor tropism switching</keyword>
<keyword id="KW-1160">Virus entry into host cell</keyword>
<evidence type="ECO:0000255" key="1">
    <source>
        <dbReference type="PROSITE-ProRule" id="PRU01072"/>
    </source>
</evidence>
<evidence type="ECO:0000269" key="2">
    <source>
    </source>
</evidence>
<evidence type="ECO:0000269" key="3">
    <source>
    </source>
</evidence>
<evidence type="ECO:0000269" key="4">
    <source>
    </source>
</evidence>
<evidence type="ECO:0000269" key="5">
    <source>
    </source>
</evidence>
<evidence type="ECO:0000269" key="6">
    <source>
    </source>
</evidence>
<evidence type="ECO:0000269" key="7">
    <source>
    </source>
</evidence>
<evidence type="ECO:0000269" key="8">
    <source>
    </source>
</evidence>
<evidence type="ECO:0000305" key="9"/>
<name>GIN_BPMU</name>
<proteinExistence type="evidence at protein level"/>
<comment type="function">
    <text evidence="2 3 5 6">Performs inversion of a viral 3 kp segment (G-segment) that encodes two alternate pairs of tail fiber proteins thereby modifying the host specificity of the virus. Binds as a dimer to the viral gix sites which are 34-bp palindromic sequences that flank the invertible G-segment. Catalyzes site-specific recombination in the presence of the host factor Fis. Gin dimers bound to each of the gix sites and host factor Fis bound to the enhancer come together to form the synaptic complex. Each Gin monomer introduces a nick and becomes covalently attached to the 5'-phosphate of the DNA, resulting in double-stranded staggered breaks at both recombination sites. A 180 degrees rotation of one of the two Gin dimers followed by religation of the DNA leads to the inversion of the G-segment (G+ or G- orientation).</text>
</comment>
<comment type="subunit">
    <text evidence="2 7">Homodimer. During inversion, two dimers associate to form a homotetramer.</text>
</comment>
<comment type="subcellular location">
    <subcellularLocation>
        <location evidence="9">Host cytoplasm</location>
    </subcellularLocation>
</comment>
<comment type="induction">
    <text evidence="8">Expressed in the late phase of the viral replicative cycle. Expression of late genes is activated by the viral late transcription activator C.</text>
</comment>
<comment type="domain">
    <text>The dimerization region is in the N-terminus.</text>
</comment>
<comment type="miscellaneous">
    <text>The orientation of the G segment is defined as G+ and G-. G+ orientation provides S-U fibers whereas G- provides S'-U' fibers. S-U and S'-U' dont have the same host range (e.g. respectively E.coli and C.freundii).</text>
</comment>
<comment type="similarity">
    <text evidence="9">Belongs to the site-specific recombinase resolvase family.</text>
</comment>
<comment type="caution">
    <text evidence="9">Translation initiates from a non-canonical start codon (GUG).</text>
</comment>
<feature type="chain" id="PRO_0000196354" description="Serine recombinase gin">
    <location>
        <begin position="1"/>
        <end position="193"/>
    </location>
</feature>
<feature type="domain" description="Resolvase/invertase-type recombinase catalytic" evidence="1">
    <location>
        <begin position="1"/>
        <end position="134"/>
    </location>
</feature>
<feature type="DNA-binding region" description="H-T-H motif">
    <location>
        <begin position="138"/>
        <end position="183"/>
    </location>
</feature>
<feature type="active site" description="O-(5'-phospho-DNA)-serine intermediate" evidence="1 4">
    <location>
        <position position="9"/>
    </location>
</feature>
<feature type="mutagenesis site" description="Recombination deficient." evidence="4">
    <original>S</original>
    <variation>A</variation>
    <variation>L</variation>
    <variation>T</variation>
    <location>
        <position position="9"/>
    </location>
</feature>
<feature type="sequence conflict" description="In Ref. 1; no nucleotide entry." evidence="9" ref="1">
    <original>A</original>
    <variation>D</variation>
    <location>
        <position position="48"/>
    </location>
</feature>
<organismHost>
    <name type="scientific">Enterobacteriaceae</name>
    <dbReference type="NCBI Taxonomy" id="543"/>
</organismHost>
<gene>
    <name type="primary">gin</name>
    <name type="ordered locus">Mup53</name>
</gene>